<keyword id="KW-0004">4Fe-4S</keyword>
<keyword id="KW-0997">Cell inner membrane</keyword>
<keyword id="KW-1003">Cell membrane</keyword>
<keyword id="KW-0408">Iron</keyword>
<keyword id="KW-0411">Iron-sulfur</keyword>
<keyword id="KW-0472">Membrane</keyword>
<keyword id="KW-0479">Metal-binding</keyword>
<keyword id="KW-0520">NAD</keyword>
<keyword id="KW-0874">Quinone</keyword>
<keyword id="KW-1278">Translocase</keyword>
<keyword id="KW-0813">Transport</keyword>
<proteinExistence type="inferred from homology"/>
<evidence type="ECO:0000255" key="1">
    <source>
        <dbReference type="HAMAP-Rule" id="MF_01356"/>
    </source>
</evidence>
<dbReference type="EC" id="7.1.1.-" evidence="1"/>
<dbReference type="EMBL" id="CP000607">
    <property type="protein sequence ID" value="ABP37106.1"/>
    <property type="molecule type" value="Genomic_DNA"/>
</dbReference>
<dbReference type="SMR" id="A4SF47"/>
<dbReference type="STRING" id="290318.Cvib_1092"/>
<dbReference type="KEGG" id="pvi:Cvib_1092"/>
<dbReference type="eggNOG" id="COG0377">
    <property type="taxonomic scope" value="Bacteria"/>
</dbReference>
<dbReference type="HOGENOM" id="CLU_055737_7_3_10"/>
<dbReference type="OrthoDB" id="9786737at2"/>
<dbReference type="GO" id="GO:0005886">
    <property type="term" value="C:plasma membrane"/>
    <property type="evidence" value="ECO:0007669"/>
    <property type="project" value="UniProtKB-SubCell"/>
</dbReference>
<dbReference type="GO" id="GO:0045271">
    <property type="term" value="C:respiratory chain complex I"/>
    <property type="evidence" value="ECO:0007669"/>
    <property type="project" value="TreeGrafter"/>
</dbReference>
<dbReference type="GO" id="GO:0051539">
    <property type="term" value="F:4 iron, 4 sulfur cluster binding"/>
    <property type="evidence" value="ECO:0007669"/>
    <property type="project" value="UniProtKB-KW"/>
</dbReference>
<dbReference type="GO" id="GO:0005506">
    <property type="term" value="F:iron ion binding"/>
    <property type="evidence" value="ECO:0007669"/>
    <property type="project" value="UniProtKB-UniRule"/>
</dbReference>
<dbReference type="GO" id="GO:0008137">
    <property type="term" value="F:NADH dehydrogenase (ubiquinone) activity"/>
    <property type="evidence" value="ECO:0007669"/>
    <property type="project" value="InterPro"/>
</dbReference>
<dbReference type="GO" id="GO:0050136">
    <property type="term" value="F:NADH:ubiquinone reductase (non-electrogenic) activity"/>
    <property type="evidence" value="ECO:0007669"/>
    <property type="project" value="UniProtKB-UniRule"/>
</dbReference>
<dbReference type="GO" id="GO:0048038">
    <property type="term" value="F:quinone binding"/>
    <property type="evidence" value="ECO:0007669"/>
    <property type="project" value="UniProtKB-KW"/>
</dbReference>
<dbReference type="GO" id="GO:0009060">
    <property type="term" value="P:aerobic respiration"/>
    <property type="evidence" value="ECO:0007669"/>
    <property type="project" value="TreeGrafter"/>
</dbReference>
<dbReference type="GO" id="GO:0015990">
    <property type="term" value="P:electron transport coupled proton transport"/>
    <property type="evidence" value="ECO:0007669"/>
    <property type="project" value="TreeGrafter"/>
</dbReference>
<dbReference type="FunFam" id="3.40.50.12280:FF:000002">
    <property type="entry name" value="NADH-quinone oxidoreductase subunit B"/>
    <property type="match status" value="1"/>
</dbReference>
<dbReference type="Gene3D" id="3.40.50.12280">
    <property type="match status" value="1"/>
</dbReference>
<dbReference type="HAMAP" id="MF_01356">
    <property type="entry name" value="NDH1_NuoB"/>
    <property type="match status" value="1"/>
</dbReference>
<dbReference type="InterPro" id="IPR006137">
    <property type="entry name" value="NADH_UbQ_OxRdtase-like_20kDa"/>
</dbReference>
<dbReference type="InterPro" id="IPR006138">
    <property type="entry name" value="NADH_UQ_OxRdtase_20Kd_su"/>
</dbReference>
<dbReference type="NCBIfam" id="TIGR01957">
    <property type="entry name" value="nuoB_fam"/>
    <property type="match status" value="1"/>
</dbReference>
<dbReference type="NCBIfam" id="NF005012">
    <property type="entry name" value="PRK06411.1"/>
    <property type="match status" value="1"/>
</dbReference>
<dbReference type="NCBIfam" id="NF011388">
    <property type="entry name" value="PRK14813.1"/>
    <property type="match status" value="1"/>
</dbReference>
<dbReference type="PANTHER" id="PTHR11995">
    <property type="entry name" value="NADH DEHYDROGENASE"/>
    <property type="match status" value="1"/>
</dbReference>
<dbReference type="PANTHER" id="PTHR11995:SF33">
    <property type="entry name" value="NADH-QUINONE OXIDOREDUCTASE SUBUNIT B 2"/>
    <property type="match status" value="1"/>
</dbReference>
<dbReference type="Pfam" id="PF01058">
    <property type="entry name" value="Oxidored_q6"/>
    <property type="match status" value="1"/>
</dbReference>
<dbReference type="SUPFAM" id="SSF56770">
    <property type="entry name" value="HydA/Nqo6-like"/>
    <property type="match status" value="1"/>
</dbReference>
<dbReference type="PROSITE" id="PS01150">
    <property type="entry name" value="COMPLEX1_20K"/>
    <property type="match status" value="1"/>
</dbReference>
<organism>
    <name type="scientific">Chlorobium phaeovibrioides (strain DSM 265 / 1930)</name>
    <name type="common">Prosthecochloris vibrioformis (strain DSM 265)</name>
    <dbReference type="NCBI Taxonomy" id="290318"/>
    <lineage>
        <taxon>Bacteria</taxon>
        <taxon>Pseudomonadati</taxon>
        <taxon>Chlorobiota</taxon>
        <taxon>Chlorobiia</taxon>
        <taxon>Chlorobiales</taxon>
        <taxon>Chlorobiaceae</taxon>
        <taxon>Chlorobium/Pelodictyon group</taxon>
        <taxon>Chlorobium</taxon>
    </lineage>
</organism>
<comment type="function">
    <text evidence="1">NDH-1 shuttles electrons from NADH, via FMN and iron-sulfur (Fe-S) centers, to quinones in the respiratory chain. The immediate electron acceptor for the enzyme in this species is believed to be a menaquinone. Couples the redox reaction to proton translocation (for every two electrons transferred, four hydrogen ions are translocated across the cytoplasmic membrane), and thus conserves the redox energy in a proton gradient.</text>
</comment>
<comment type="catalytic activity">
    <reaction evidence="1">
        <text>a quinone + NADH + 5 H(+)(in) = a quinol + NAD(+) + 4 H(+)(out)</text>
        <dbReference type="Rhea" id="RHEA:57888"/>
        <dbReference type="ChEBI" id="CHEBI:15378"/>
        <dbReference type="ChEBI" id="CHEBI:24646"/>
        <dbReference type="ChEBI" id="CHEBI:57540"/>
        <dbReference type="ChEBI" id="CHEBI:57945"/>
        <dbReference type="ChEBI" id="CHEBI:132124"/>
    </reaction>
</comment>
<comment type="cofactor">
    <cofactor evidence="1">
        <name>[4Fe-4S] cluster</name>
        <dbReference type="ChEBI" id="CHEBI:49883"/>
    </cofactor>
    <text evidence="1">Binds 1 [4Fe-4S] cluster.</text>
</comment>
<comment type="subunit">
    <text evidence="1">NDH-1 is composed of 14 different subunits. Subunits NuoB, C, D, E, F, and G constitute the peripheral sector of the complex.</text>
</comment>
<comment type="subcellular location">
    <subcellularLocation>
        <location evidence="1">Cell inner membrane</location>
        <topology evidence="1">Peripheral membrane protein</topology>
        <orientation evidence="1">Cytoplasmic side</orientation>
    </subcellularLocation>
</comment>
<comment type="similarity">
    <text evidence="1">Belongs to the complex I 20 kDa subunit family.</text>
</comment>
<feature type="chain" id="PRO_0000376305" description="NADH-quinone oxidoreductase subunit B">
    <location>
        <begin position="1"/>
        <end position="189"/>
    </location>
</feature>
<feature type="binding site" evidence="1">
    <location>
        <position position="39"/>
    </location>
    <ligand>
        <name>[4Fe-4S] cluster</name>
        <dbReference type="ChEBI" id="CHEBI:49883"/>
    </ligand>
</feature>
<feature type="binding site" evidence="1">
    <location>
        <position position="40"/>
    </location>
    <ligand>
        <name>[4Fe-4S] cluster</name>
        <dbReference type="ChEBI" id="CHEBI:49883"/>
    </ligand>
</feature>
<feature type="binding site" evidence="1">
    <location>
        <position position="104"/>
    </location>
    <ligand>
        <name>[4Fe-4S] cluster</name>
        <dbReference type="ChEBI" id="CHEBI:49883"/>
    </ligand>
</feature>
<feature type="binding site" evidence="1">
    <location>
        <position position="135"/>
    </location>
    <ligand>
        <name>[4Fe-4S] cluster</name>
        <dbReference type="ChEBI" id="CHEBI:49883"/>
    </ligand>
</feature>
<accession>A4SF47</accession>
<sequence length="189" mass="20817">MGLLDAAVSRQNVLVTSVDSVLNWARLSSLWPMGFGLACCAIEMMATNASNYDLERFGIFPRSSPRQSDLMIVAGTVTMKMAERVVRLYEQMPEPRYVLSMGSCSNCGGPYWEHGYHVLKGVDRVIPVDVYVPGCPPRPEALIGGLMKIQELIRMEGLGVSRADALKKLAEAESDPQPLIEEARKQKTA</sequence>
<reference key="1">
    <citation type="submission" date="2007-03" db="EMBL/GenBank/DDBJ databases">
        <title>Complete sequence of Prosthecochloris vibrioformis DSM 265.</title>
        <authorList>
            <consortium name="US DOE Joint Genome Institute"/>
            <person name="Copeland A."/>
            <person name="Lucas S."/>
            <person name="Lapidus A."/>
            <person name="Barry K."/>
            <person name="Detter J.C."/>
            <person name="Glavina del Rio T."/>
            <person name="Hammon N."/>
            <person name="Israni S."/>
            <person name="Pitluck S."/>
            <person name="Schmutz J."/>
            <person name="Larimer F."/>
            <person name="Land M."/>
            <person name="Hauser L."/>
            <person name="Mikhailova N."/>
            <person name="Li T."/>
            <person name="Overmann J."/>
            <person name="Schuster S.C."/>
            <person name="Bryant D.A."/>
            <person name="Richardson P."/>
        </authorList>
    </citation>
    <scope>NUCLEOTIDE SEQUENCE [LARGE SCALE GENOMIC DNA]</scope>
    <source>
        <strain>DSM 265 / 1930</strain>
    </source>
</reference>
<protein>
    <recommendedName>
        <fullName evidence="1">NADH-quinone oxidoreductase subunit B</fullName>
        <ecNumber evidence="1">7.1.1.-</ecNumber>
    </recommendedName>
    <alternativeName>
        <fullName evidence="1">NADH dehydrogenase I subunit B</fullName>
    </alternativeName>
    <alternativeName>
        <fullName evidence="1">NDH-1 subunit B</fullName>
    </alternativeName>
</protein>
<name>NUOB_CHLPM</name>
<gene>
    <name evidence="1" type="primary">nuoB</name>
    <name type="ordered locus">Cvib_1092</name>
</gene>